<accession>Q9DAX9</accession>
<accession>Q5SX12</accession>
<accession>Q80U61</accession>
<dbReference type="EMBL" id="AK005440">
    <property type="protein sequence ID" value="BAB24034.1"/>
    <property type="molecule type" value="mRNA"/>
</dbReference>
<dbReference type="EMBL" id="AL596183">
    <property type="status" value="NOT_ANNOTATED_CDS"/>
    <property type="molecule type" value="Genomic_DNA"/>
</dbReference>
<dbReference type="EMBL" id="BC018442">
    <property type="protein sequence ID" value="AAH18442.1"/>
    <property type="molecule type" value="mRNA"/>
</dbReference>
<dbReference type="EMBL" id="BC019152">
    <property type="protein sequence ID" value="AAH19152.1"/>
    <property type="molecule type" value="mRNA"/>
</dbReference>
<dbReference type="EMBL" id="AK122222">
    <property type="protein sequence ID" value="BAC65504.1"/>
    <property type="molecule type" value="mRNA"/>
</dbReference>
<dbReference type="CCDS" id="CCDS25193.1"/>
<dbReference type="RefSeq" id="NP_080101.1">
    <property type="nucleotide sequence ID" value="NM_025825.3"/>
</dbReference>
<dbReference type="SMR" id="Q9DAX9"/>
<dbReference type="BioGRID" id="211787">
    <property type="interactions" value="3"/>
</dbReference>
<dbReference type="FunCoup" id="Q9DAX9">
    <property type="interactions" value="3290"/>
</dbReference>
<dbReference type="IntAct" id="Q9DAX9">
    <property type="interactions" value="1"/>
</dbReference>
<dbReference type="MINT" id="Q9DAX9"/>
<dbReference type="STRING" id="10090.ENSMUSP00000018625"/>
<dbReference type="iPTMnet" id="Q9DAX9"/>
<dbReference type="PhosphoSitePlus" id="Q9DAX9"/>
<dbReference type="PaxDb" id="10090-ENSMUSP00000018625"/>
<dbReference type="PeptideAtlas" id="Q9DAX9"/>
<dbReference type="ProteomicsDB" id="296058"/>
<dbReference type="Pumba" id="Q9DAX9"/>
<dbReference type="Antibodypedia" id="31181">
    <property type="antibodies" value="327 antibodies from 30 providers"/>
</dbReference>
<dbReference type="DNASU" id="66884"/>
<dbReference type="Ensembl" id="ENSMUST00000018625.10">
    <property type="protein sequence ID" value="ENSMUSP00000018625.10"/>
    <property type="gene ID" value="ENSMUSG00000018481.10"/>
</dbReference>
<dbReference type="GeneID" id="66884"/>
<dbReference type="KEGG" id="mmu:66884"/>
<dbReference type="UCSC" id="uc007krj.1">
    <property type="organism name" value="mouse"/>
</dbReference>
<dbReference type="AGR" id="MGI:1914134"/>
<dbReference type="CTD" id="10513"/>
<dbReference type="MGI" id="MGI:1914134">
    <property type="gene designation" value="Appbp2"/>
</dbReference>
<dbReference type="VEuPathDB" id="HostDB:ENSMUSG00000018481"/>
<dbReference type="eggNOG" id="KOG1840">
    <property type="taxonomic scope" value="Eukaryota"/>
</dbReference>
<dbReference type="GeneTree" id="ENSGT00390000010722"/>
<dbReference type="HOGENOM" id="CLU_019378_1_0_1"/>
<dbReference type="InParanoid" id="Q9DAX9"/>
<dbReference type="OMA" id="YAESSHC"/>
<dbReference type="OrthoDB" id="7103806at2759"/>
<dbReference type="PhylomeDB" id="Q9DAX9"/>
<dbReference type="TreeFam" id="TF314010"/>
<dbReference type="UniPathway" id="UPA00143"/>
<dbReference type="BioGRID-ORCS" id="66884">
    <property type="hits" value="2 hits in 77 CRISPR screens"/>
</dbReference>
<dbReference type="ChiTaRS" id="Appbp2">
    <property type="organism name" value="mouse"/>
</dbReference>
<dbReference type="PRO" id="PR:Q9DAX9"/>
<dbReference type="Proteomes" id="UP000000589">
    <property type="component" value="Chromosome 11"/>
</dbReference>
<dbReference type="RNAct" id="Q9DAX9">
    <property type="molecule type" value="protein"/>
</dbReference>
<dbReference type="Bgee" id="ENSMUSG00000018481">
    <property type="expression patterns" value="Expressed in humerus cartilage element and 246 other cell types or tissues"/>
</dbReference>
<dbReference type="GO" id="GO:0031462">
    <property type="term" value="C:Cul2-RING ubiquitin ligase complex"/>
    <property type="evidence" value="ECO:0000250"/>
    <property type="project" value="UniProtKB"/>
</dbReference>
<dbReference type="GO" id="GO:0030659">
    <property type="term" value="C:cytoplasmic vesicle membrane"/>
    <property type="evidence" value="ECO:0000266"/>
    <property type="project" value="MGI"/>
</dbReference>
<dbReference type="GO" id="GO:0005874">
    <property type="term" value="C:microtubule"/>
    <property type="evidence" value="ECO:0007669"/>
    <property type="project" value="UniProtKB-KW"/>
</dbReference>
<dbReference type="GO" id="GO:0005654">
    <property type="term" value="C:nucleoplasm"/>
    <property type="evidence" value="ECO:0007669"/>
    <property type="project" value="Ensembl"/>
</dbReference>
<dbReference type="GO" id="GO:1990756">
    <property type="term" value="F:ubiquitin-like ligase-substrate adaptor activity"/>
    <property type="evidence" value="ECO:0000250"/>
    <property type="project" value="UniProtKB"/>
</dbReference>
<dbReference type="GO" id="GO:0006886">
    <property type="term" value="P:intracellular protein transport"/>
    <property type="evidence" value="ECO:0007669"/>
    <property type="project" value="InterPro"/>
</dbReference>
<dbReference type="GO" id="GO:0046907">
    <property type="term" value="P:intracellular transport"/>
    <property type="evidence" value="ECO:0000266"/>
    <property type="project" value="MGI"/>
</dbReference>
<dbReference type="GO" id="GO:0043161">
    <property type="term" value="P:proteasome-mediated ubiquitin-dependent protein catabolic process"/>
    <property type="evidence" value="ECO:0000250"/>
    <property type="project" value="UniProtKB"/>
</dbReference>
<dbReference type="GO" id="GO:0016567">
    <property type="term" value="P:protein ubiquitination"/>
    <property type="evidence" value="ECO:0007669"/>
    <property type="project" value="UniProtKB-UniPathway"/>
</dbReference>
<dbReference type="FunFam" id="1.25.40.10:FF:000177">
    <property type="entry name" value="Amyloid beta precursor protein binding protein 2"/>
    <property type="match status" value="1"/>
</dbReference>
<dbReference type="FunFam" id="1.25.40.10:FF:000152">
    <property type="entry name" value="Amyloid protein-binding protein 2 isoform 1"/>
    <property type="match status" value="1"/>
</dbReference>
<dbReference type="Gene3D" id="1.25.40.10">
    <property type="entry name" value="Tetratricopeptide repeat domain"/>
    <property type="match status" value="2"/>
</dbReference>
<dbReference type="InterPro" id="IPR042476">
    <property type="entry name" value="APPBP2"/>
</dbReference>
<dbReference type="InterPro" id="IPR011990">
    <property type="entry name" value="TPR-like_helical_dom_sf"/>
</dbReference>
<dbReference type="InterPro" id="IPR019734">
    <property type="entry name" value="TPR_rpt"/>
</dbReference>
<dbReference type="PANTHER" id="PTHR46575">
    <property type="entry name" value="AMYLOID PROTEIN-BINDING PROTEIN 2"/>
    <property type="match status" value="1"/>
</dbReference>
<dbReference type="PANTHER" id="PTHR46575:SF1">
    <property type="entry name" value="AMYLOID PROTEIN-BINDING PROTEIN 2"/>
    <property type="match status" value="1"/>
</dbReference>
<dbReference type="Pfam" id="PF13374">
    <property type="entry name" value="TPR_10"/>
    <property type="match status" value="1"/>
</dbReference>
<dbReference type="Pfam" id="PF13424">
    <property type="entry name" value="TPR_12"/>
    <property type="match status" value="1"/>
</dbReference>
<dbReference type="SMART" id="SM00028">
    <property type="entry name" value="TPR"/>
    <property type="match status" value="3"/>
</dbReference>
<dbReference type="SUPFAM" id="SSF48452">
    <property type="entry name" value="TPR-like"/>
    <property type="match status" value="2"/>
</dbReference>
<dbReference type="PROSITE" id="PS50005">
    <property type="entry name" value="TPR"/>
    <property type="match status" value="2"/>
</dbReference>
<dbReference type="PROSITE" id="PS50293">
    <property type="entry name" value="TPR_REGION"/>
    <property type="match status" value="1"/>
</dbReference>
<sequence>MAAVELEWIPETLYNTAISAVVDNYIRSRRDIRSLPENIQFDVYYKLYQQGRLCQLGSEFCELEVFAKVLRALDKRHLLHHCFQALMDHGVKVASVLAYSFSRRCSYIAESDAAVKEKAIQVGFVLGGFLSDAGWYSDAEKVFLSCLQLCTLHDEMLHWFRAVECCVRLLHVRNGNCKYHLGEETFKLAQTYMDKLSKHGQQANRAALYGELCALLFAKSHYDEAYKWCVEAMKEITAGLPVKVVVDVLRQASKACVVKREFKKAEQLIKHAVYLARDHFGSKHPKYSDTLLDYGFYLLNVDNICQSVAIYQAALDIRQSVFGGKNIHVATAHEDLAYSSYVHQYSSGKFDNALFHAERAIGIITHILPEDHLLLASSKRVKALILEEIAIDCHNKETEQRLLQEAHDLHLSSLQLAKKAFGEFNVQTAKHYGNLGRLYQSMRKFKEAEEMHIKAIQIKEQLLGQEDYEVALSVGHLASLYNYDMNQYENAEKLYLRSIAIGKKLFGEGYSGLEYDYRGLIKLYNSIGNYEKVFEYHNVLSNWNRLRDRQYSVTDALEDVSSSPQSTEEVVQSFLMAQNVEGPSC</sequence>
<gene>
    <name evidence="4" type="primary">Appbp2</name>
    <name evidence="2" type="synonym">Kiaa0228</name>
</gene>
<proteinExistence type="evidence at transcript level"/>
<comment type="function">
    <text evidence="1">Substrate-recognition component of a Cul2-RING (CRL2) E3 ubiquitin-protein ligase complex of the DesCEND (destruction via C-end degrons) pathway, which recognizes a C-degron located at the extreme C terminus of target proteins, leading to their ubiquitination and degradation. The C-degron recognized by the DesCEND pathway is usually a motif of less than ten residues and can be present in full-length proteins, truncated proteins or proteolytically cleaved forms. The CRL2(APPBP2) complex specifically recognizes proteins with a -Arg-Xaa-Xaa-Gly degron at the C-terminus, leading to their ubiquitination and degradation. The CRL2(APPBP2) complex mediates ubiquitination and degradation of truncated SELENOV selenoproteins produced by failed UGA/Sec decoding, which end with a -Arg-Xaa-Xaa-Gly degron. May play a role in intracellular protein transport: may be involved in the translocation of APP along microtubules toward the cell surface.</text>
</comment>
<comment type="activity regulation">
    <text evidence="1">E3 ubiquitin-protein ligase activity of the CRL2(APPBP2) complex is inhibited by APP.</text>
</comment>
<comment type="pathway">
    <text evidence="1">Protein modification; protein ubiquitination.</text>
</comment>
<comment type="subunit">
    <text evidence="1">Component of a CRL2 E3 ubiquitin-protein ligase complex, also named ECS (Elongin BC-CUL2/5-SOCS-box protein) complex, composed of CUL2, Elongin BC (ELOB and ELOC), RBX1 and substrate-specific adapter APPBP2. Interacts with APP; APP interaction inhibits the E3 ubiquitin-protein ligase activity of the CRL2(APPBP2) complex.</text>
</comment>
<comment type="subcellular location">
    <subcellularLocation>
        <location evidence="1">Nucleus</location>
    </subcellularLocation>
    <subcellularLocation>
        <location evidence="1">Cytoplasm</location>
        <location evidence="1">Cytoskeleton</location>
    </subcellularLocation>
    <subcellularLocation>
        <location evidence="1">Membrane</location>
        <topology evidence="1">Peripheral membrane protein</topology>
    </subcellularLocation>
    <text evidence="1">Associated with membranes and microtubules.</text>
</comment>
<comment type="PTM">
    <text evidence="1">Rapidly degraded by the proteasome upon overexpression of a C-terminal fragment of APP.</text>
</comment>
<keyword id="KW-0963">Cytoplasm</keyword>
<keyword id="KW-0206">Cytoskeleton</keyword>
<keyword id="KW-0472">Membrane</keyword>
<keyword id="KW-0493">Microtubule</keyword>
<keyword id="KW-0539">Nucleus</keyword>
<keyword id="KW-0653">Protein transport</keyword>
<keyword id="KW-1185">Reference proteome</keyword>
<keyword id="KW-0677">Repeat</keyword>
<keyword id="KW-0802">TPR repeat</keyword>
<keyword id="KW-0813">Transport</keyword>
<keyword id="KW-0833">Ubl conjugation pathway</keyword>
<evidence type="ECO:0000250" key="1">
    <source>
        <dbReference type="UniProtKB" id="Q92624"/>
    </source>
</evidence>
<evidence type="ECO:0000303" key="2">
    <source>
    </source>
</evidence>
<evidence type="ECO:0000305" key="3"/>
<evidence type="ECO:0000312" key="4">
    <source>
        <dbReference type="MGI" id="MGI:1914134"/>
    </source>
</evidence>
<protein>
    <recommendedName>
        <fullName evidence="3">Amyloid protein-binding protein 2</fullName>
    </recommendedName>
    <alternativeName>
        <fullName evidence="1">Amyloid beta precursor protein-binding protein 2</fullName>
        <shortName evidence="1">APP-BP2</shortName>
    </alternativeName>
</protein>
<name>APBP2_MOUSE</name>
<organism>
    <name type="scientific">Mus musculus</name>
    <name type="common">Mouse</name>
    <dbReference type="NCBI Taxonomy" id="10090"/>
    <lineage>
        <taxon>Eukaryota</taxon>
        <taxon>Metazoa</taxon>
        <taxon>Chordata</taxon>
        <taxon>Craniata</taxon>
        <taxon>Vertebrata</taxon>
        <taxon>Euteleostomi</taxon>
        <taxon>Mammalia</taxon>
        <taxon>Eutheria</taxon>
        <taxon>Euarchontoglires</taxon>
        <taxon>Glires</taxon>
        <taxon>Rodentia</taxon>
        <taxon>Myomorpha</taxon>
        <taxon>Muroidea</taxon>
        <taxon>Muridae</taxon>
        <taxon>Murinae</taxon>
        <taxon>Mus</taxon>
        <taxon>Mus</taxon>
    </lineage>
</organism>
<reference key="1">
    <citation type="journal article" date="2005" name="Science">
        <title>The transcriptional landscape of the mammalian genome.</title>
        <authorList>
            <person name="Carninci P."/>
            <person name="Kasukawa T."/>
            <person name="Katayama S."/>
            <person name="Gough J."/>
            <person name="Frith M.C."/>
            <person name="Maeda N."/>
            <person name="Oyama R."/>
            <person name="Ravasi T."/>
            <person name="Lenhard B."/>
            <person name="Wells C."/>
            <person name="Kodzius R."/>
            <person name="Shimokawa K."/>
            <person name="Bajic V.B."/>
            <person name="Brenner S.E."/>
            <person name="Batalov S."/>
            <person name="Forrest A.R."/>
            <person name="Zavolan M."/>
            <person name="Davis M.J."/>
            <person name="Wilming L.G."/>
            <person name="Aidinis V."/>
            <person name="Allen J.E."/>
            <person name="Ambesi-Impiombato A."/>
            <person name="Apweiler R."/>
            <person name="Aturaliya R.N."/>
            <person name="Bailey T.L."/>
            <person name="Bansal M."/>
            <person name="Baxter L."/>
            <person name="Beisel K.W."/>
            <person name="Bersano T."/>
            <person name="Bono H."/>
            <person name="Chalk A.M."/>
            <person name="Chiu K.P."/>
            <person name="Choudhary V."/>
            <person name="Christoffels A."/>
            <person name="Clutterbuck D.R."/>
            <person name="Crowe M.L."/>
            <person name="Dalla E."/>
            <person name="Dalrymple B.P."/>
            <person name="de Bono B."/>
            <person name="Della Gatta G."/>
            <person name="di Bernardo D."/>
            <person name="Down T."/>
            <person name="Engstrom P."/>
            <person name="Fagiolini M."/>
            <person name="Faulkner G."/>
            <person name="Fletcher C.F."/>
            <person name="Fukushima T."/>
            <person name="Furuno M."/>
            <person name="Futaki S."/>
            <person name="Gariboldi M."/>
            <person name="Georgii-Hemming P."/>
            <person name="Gingeras T.R."/>
            <person name="Gojobori T."/>
            <person name="Green R.E."/>
            <person name="Gustincich S."/>
            <person name="Harbers M."/>
            <person name="Hayashi Y."/>
            <person name="Hensch T.K."/>
            <person name="Hirokawa N."/>
            <person name="Hill D."/>
            <person name="Huminiecki L."/>
            <person name="Iacono M."/>
            <person name="Ikeo K."/>
            <person name="Iwama A."/>
            <person name="Ishikawa T."/>
            <person name="Jakt M."/>
            <person name="Kanapin A."/>
            <person name="Katoh M."/>
            <person name="Kawasawa Y."/>
            <person name="Kelso J."/>
            <person name="Kitamura H."/>
            <person name="Kitano H."/>
            <person name="Kollias G."/>
            <person name="Krishnan S.P."/>
            <person name="Kruger A."/>
            <person name="Kummerfeld S.K."/>
            <person name="Kurochkin I.V."/>
            <person name="Lareau L.F."/>
            <person name="Lazarevic D."/>
            <person name="Lipovich L."/>
            <person name="Liu J."/>
            <person name="Liuni S."/>
            <person name="McWilliam S."/>
            <person name="Madan Babu M."/>
            <person name="Madera M."/>
            <person name="Marchionni L."/>
            <person name="Matsuda H."/>
            <person name="Matsuzawa S."/>
            <person name="Miki H."/>
            <person name="Mignone F."/>
            <person name="Miyake S."/>
            <person name="Morris K."/>
            <person name="Mottagui-Tabar S."/>
            <person name="Mulder N."/>
            <person name="Nakano N."/>
            <person name="Nakauchi H."/>
            <person name="Ng P."/>
            <person name="Nilsson R."/>
            <person name="Nishiguchi S."/>
            <person name="Nishikawa S."/>
            <person name="Nori F."/>
            <person name="Ohara O."/>
            <person name="Okazaki Y."/>
            <person name="Orlando V."/>
            <person name="Pang K.C."/>
            <person name="Pavan W.J."/>
            <person name="Pavesi G."/>
            <person name="Pesole G."/>
            <person name="Petrovsky N."/>
            <person name="Piazza S."/>
            <person name="Reed J."/>
            <person name="Reid J.F."/>
            <person name="Ring B.Z."/>
            <person name="Ringwald M."/>
            <person name="Rost B."/>
            <person name="Ruan Y."/>
            <person name="Salzberg S.L."/>
            <person name="Sandelin A."/>
            <person name="Schneider C."/>
            <person name="Schoenbach C."/>
            <person name="Sekiguchi K."/>
            <person name="Semple C.A."/>
            <person name="Seno S."/>
            <person name="Sessa L."/>
            <person name="Sheng Y."/>
            <person name="Shibata Y."/>
            <person name="Shimada H."/>
            <person name="Shimada K."/>
            <person name="Silva D."/>
            <person name="Sinclair B."/>
            <person name="Sperling S."/>
            <person name="Stupka E."/>
            <person name="Sugiura K."/>
            <person name="Sultana R."/>
            <person name="Takenaka Y."/>
            <person name="Taki K."/>
            <person name="Tammoja K."/>
            <person name="Tan S.L."/>
            <person name="Tang S."/>
            <person name="Taylor M.S."/>
            <person name="Tegner J."/>
            <person name="Teichmann S.A."/>
            <person name="Ueda H.R."/>
            <person name="van Nimwegen E."/>
            <person name="Verardo R."/>
            <person name="Wei C.L."/>
            <person name="Yagi K."/>
            <person name="Yamanishi H."/>
            <person name="Zabarovsky E."/>
            <person name="Zhu S."/>
            <person name="Zimmer A."/>
            <person name="Hide W."/>
            <person name="Bult C."/>
            <person name="Grimmond S.M."/>
            <person name="Teasdale R.D."/>
            <person name="Liu E.T."/>
            <person name="Brusic V."/>
            <person name="Quackenbush J."/>
            <person name="Wahlestedt C."/>
            <person name="Mattick J.S."/>
            <person name="Hume D.A."/>
            <person name="Kai C."/>
            <person name="Sasaki D."/>
            <person name="Tomaru Y."/>
            <person name="Fukuda S."/>
            <person name="Kanamori-Katayama M."/>
            <person name="Suzuki M."/>
            <person name="Aoki J."/>
            <person name="Arakawa T."/>
            <person name="Iida J."/>
            <person name="Imamura K."/>
            <person name="Itoh M."/>
            <person name="Kato T."/>
            <person name="Kawaji H."/>
            <person name="Kawagashira N."/>
            <person name="Kawashima T."/>
            <person name="Kojima M."/>
            <person name="Kondo S."/>
            <person name="Konno H."/>
            <person name="Nakano K."/>
            <person name="Ninomiya N."/>
            <person name="Nishio T."/>
            <person name="Okada M."/>
            <person name="Plessy C."/>
            <person name="Shibata K."/>
            <person name="Shiraki T."/>
            <person name="Suzuki S."/>
            <person name="Tagami M."/>
            <person name="Waki K."/>
            <person name="Watahiki A."/>
            <person name="Okamura-Oho Y."/>
            <person name="Suzuki H."/>
            <person name="Kawai J."/>
            <person name="Hayashizaki Y."/>
        </authorList>
    </citation>
    <scope>NUCLEOTIDE SEQUENCE [LARGE SCALE MRNA]</scope>
    <source>
        <strain>C57BL/6J</strain>
        <tissue>Placenta</tissue>
    </source>
</reference>
<reference key="2">
    <citation type="journal article" date="2009" name="PLoS Biol.">
        <title>Lineage-specific biology revealed by a finished genome assembly of the mouse.</title>
        <authorList>
            <person name="Church D.M."/>
            <person name="Goodstadt L."/>
            <person name="Hillier L.W."/>
            <person name="Zody M.C."/>
            <person name="Goldstein S."/>
            <person name="She X."/>
            <person name="Bult C.J."/>
            <person name="Agarwala R."/>
            <person name="Cherry J.L."/>
            <person name="DiCuccio M."/>
            <person name="Hlavina W."/>
            <person name="Kapustin Y."/>
            <person name="Meric P."/>
            <person name="Maglott D."/>
            <person name="Birtle Z."/>
            <person name="Marques A.C."/>
            <person name="Graves T."/>
            <person name="Zhou S."/>
            <person name="Teague B."/>
            <person name="Potamousis K."/>
            <person name="Churas C."/>
            <person name="Place M."/>
            <person name="Herschleb J."/>
            <person name="Runnheim R."/>
            <person name="Forrest D."/>
            <person name="Amos-Landgraf J."/>
            <person name="Schwartz D.C."/>
            <person name="Cheng Z."/>
            <person name="Lindblad-Toh K."/>
            <person name="Eichler E.E."/>
            <person name="Ponting C.P."/>
        </authorList>
    </citation>
    <scope>NUCLEOTIDE SEQUENCE [LARGE SCALE GENOMIC DNA]</scope>
    <source>
        <strain>C57BL/6J</strain>
    </source>
</reference>
<reference key="3">
    <citation type="journal article" date="2004" name="Genome Res.">
        <title>The status, quality, and expansion of the NIH full-length cDNA project: the Mammalian Gene Collection (MGC).</title>
        <authorList>
            <consortium name="The MGC Project Team"/>
        </authorList>
    </citation>
    <scope>NUCLEOTIDE SEQUENCE [LARGE SCALE MRNA]</scope>
    <source>
        <tissue>Kidney</tissue>
    </source>
</reference>
<reference key="4">
    <citation type="journal article" date="2003" name="DNA Res.">
        <title>Prediction of the coding sequences of mouse homologues of KIAA gene: II. The complete nucleotide sequences of 400 mouse KIAA-homologous cDNAs identified by screening of terminal sequences of cDNA clones randomly sampled from size-fractionated libraries.</title>
        <authorList>
            <person name="Okazaki N."/>
            <person name="Kikuno R."/>
            <person name="Ohara R."/>
            <person name="Inamoto S."/>
            <person name="Aizawa H."/>
            <person name="Yuasa S."/>
            <person name="Nakajima D."/>
            <person name="Nagase T."/>
            <person name="Ohara O."/>
            <person name="Koga H."/>
        </authorList>
    </citation>
    <scope>NUCLEOTIDE SEQUENCE [LARGE SCALE MRNA] OF 29-585</scope>
    <source>
        <tissue>Brain</tissue>
    </source>
</reference>
<feature type="chain" id="PRO_0000106260" description="Amyloid protein-binding protein 2">
    <location>
        <begin position="1"/>
        <end position="585"/>
    </location>
</feature>
<feature type="repeat" description="TPR 1">
    <location>
        <begin position="50"/>
        <end position="83"/>
    </location>
</feature>
<feature type="repeat" description="TPR 2">
    <location>
        <begin position="120"/>
        <end position="153"/>
    </location>
</feature>
<feature type="repeat" description="TPR 3">
    <location>
        <begin position="206"/>
        <end position="239"/>
    </location>
</feature>
<feature type="repeat" description="TPR 4">
    <location>
        <begin position="288"/>
        <end position="321"/>
    </location>
</feature>
<feature type="repeat" description="TPR 5">
    <location>
        <begin position="333"/>
        <end position="367"/>
    </location>
</feature>
<feature type="repeat" description="TPR 6">
    <location>
        <begin position="429"/>
        <end position="462"/>
    </location>
</feature>
<feature type="repeat" description="TPR 7">
    <location>
        <begin position="471"/>
        <end position="505"/>
    </location>
</feature>
<feature type="repeat" description="TPR 8">
    <location>
        <begin position="514"/>
        <end position="547"/>
    </location>
</feature>